<reference key="1">
    <citation type="submission" date="2006-12" db="EMBL/GenBank/DDBJ databases">
        <title>Complete sequence of Shewanella sp. W3-18-1.</title>
        <authorList>
            <consortium name="US DOE Joint Genome Institute"/>
            <person name="Copeland A."/>
            <person name="Lucas S."/>
            <person name="Lapidus A."/>
            <person name="Barry K."/>
            <person name="Detter J.C."/>
            <person name="Glavina del Rio T."/>
            <person name="Hammon N."/>
            <person name="Israni S."/>
            <person name="Dalin E."/>
            <person name="Tice H."/>
            <person name="Pitluck S."/>
            <person name="Chain P."/>
            <person name="Malfatti S."/>
            <person name="Shin M."/>
            <person name="Vergez L."/>
            <person name="Schmutz J."/>
            <person name="Larimer F."/>
            <person name="Land M."/>
            <person name="Hauser L."/>
            <person name="Kyrpides N."/>
            <person name="Lykidis A."/>
            <person name="Tiedje J."/>
            <person name="Richardson P."/>
        </authorList>
    </citation>
    <scope>NUCLEOTIDE SEQUENCE [LARGE SCALE GENOMIC DNA]</scope>
    <source>
        <strain>W3-18-1</strain>
    </source>
</reference>
<feature type="chain" id="PRO_1000016996" description="Ribose-5-phosphate isomerase A">
    <location>
        <begin position="1"/>
        <end position="220"/>
    </location>
</feature>
<feature type="active site" description="Proton acceptor" evidence="1">
    <location>
        <position position="103"/>
    </location>
</feature>
<feature type="binding site" evidence="1">
    <location>
        <begin position="28"/>
        <end position="31"/>
    </location>
    <ligand>
        <name>substrate</name>
    </ligand>
</feature>
<feature type="binding site" evidence="1">
    <location>
        <begin position="81"/>
        <end position="84"/>
    </location>
    <ligand>
        <name>substrate</name>
    </ligand>
</feature>
<feature type="binding site" evidence="1">
    <location>
        <begin position="94"/>
        <end position="97"/>
    </location>
    <ligand>
        <name>substrate</name>
    </ligand>
</feature>
<feature type="binding site" evidence="1">
    <location>
        <position position="121"/>
    </location>
    <ligand>
        <name>substrate</name>
    </ligand>
</feature>
<name>RPIA_SHESW</name>
<keyword id="KW-0413">Isomerase</keyword>
<accession>A1RGR8</accession>
<dbReference type="EC" id="5.3.1.6" evidence="1"/>
<dbReference type="EMBL" id="CP000503">
    <property type="protein sequence ID" value="ABM23863.1"/>
    <property type="molecule type" value="Genomic_DNA"/>
</dbReference>
<dbReference type="RefSeq" id="WP_011788388.1">
    <property type="nucleotide sequence ID" value="NC_008750.1"/>
</dbReference>
<dbReference type="SMR" id="A1RGR8"/>
<dbReference type="KEGG" id="shw:Sputw3181_1013"/>
<dbReference type="HOGENOM" id="CLU_056590_1_1_6"/>
<dbReference type="UniPathway" id="UPA00115">
    <property type="reaction ID" value="UER00412"/>
</dbReference>
<dbReference type="Proteomes" id="UP000002597">
    <property type="component" value="Chromosome"/>
</dbReference>
<dbReference type="GO" id="GO:0005829">
    <property type="term" value="C:cytosol"/>
    <property type="evidence" value="ECO:0007669"/>
    <property type="project" value="TreeGrafter"/>
</dbReference>
<dbReference type="GO" id="GO:0004751">
    <property type="term" value="F:ribose-5-phosphate isomerase activity"/>
    <property type="evidence" value="ECO:0007669"/>
    <property type="project" value="UniProtKB-UniRule"/>
</dbReference>
<dbReference type="GO" id="GO:0006014">
    <property type="term" value="P:D-ribose metabolic process"/>
    <property type="evidence" value="ECO:0007669"/>
    <property type="project" value="TreeGrafter"/>
</dbReference>
<dbReference type="GO" id="GO:0009052">
    <property type="term" value="P:pentose-phosphate shunt, non-oxidative branch"/>
    <property type="evidence" value="ECO:0007669"/>
    <property type="project" value="UniProtKB-UniRule"/>
</dbReference>
<dbReference type="CDD" id="cd01398">
    <property type="entry name" value="RPI_A"/>
    <property type="match status" value="1"/>
</dbReference>
<dbReference type="FunFam" id="3.30.70.260:FF:000004">
    <property type="entry name" value="Ribose-5-phosphate isomerase A"/>
    <property type="match status" value="1"/>
</dbReference>
<dbReference type="FunFam" id="3.40.50.1360:FF:000001">
    <property type="entry name" value="Ribose-5-phosphate isomerase A"/>
    <property type="match status" value="1"/>
</dbReference>
<dbReference type="Gene3D" id="3.30.70.260">
    <property type="match status" value="1"/>
</dbReference>
<dbReference type="Gene3D" id="3.40.50.1360">
    <property type="match status" value="1"/>
</dbReference>
<dbReference type="HAMAP" id="MF_00170">
    <property type="entry name" value="Rib_5P_isom_A"/>
    <property type="match status" value="1"/>
</dbReference>
<dbReference type="InterPro" id="IPR037171">
    <property type="entry name" value="NagB/RpiA_transferase-like"/>
</dbReference>
<dbReference type="InterPro" id="IPR020672">
    <property type="entry name" value="Ribose5P_isomerase_typA_subgr"/>
</dbReference>
<dbReference type="InterPro" id="IPR004788">
    <property type="entry name" value="Ribose5P_isomerase_type_A"/>
</dbReference>
<dbReference type="NCBIfam" id="NF001924">
    <property type="entry name" value="PRK00702.1"/>
    <property type="match status" value="1"/>
</dbReference>
<dbReference type="NCBIfam" id="TIGR00021">
    <property type="entry name" value="rpiA"/>
    <property type="match status" value="1"/>
</dbReference>
<dbReference type="PANTHER" id="PTHR11934">
    <property type="entry name" value="RIBOSE-5-PHOSPHATE ISOMERASE"/>
    <property type="match status" value="1"/>
</dbReference>
<dbReference type="PANTHER" id="PTHR11934:SF0">
    <property type="entry name" value="RIBOSE-5-PHOSPHATE ISOMERASE"/>
    <property type="match status" value="1"/>
</dbReference>
<dbReference type="Pfam" id="PF06026">
    <property type="entry name" value="Rib_5-P_isom_A"/>
    <property type="match status" value="1"/>
</dbReference>
<dbReference type="SUPFAM" id="SSF75445">
    <property type="entry name" value="D-ribose-5-phosphate isomerase (RpiA), lid domain"/>
    <property type="match status" value="1"/>
</dbReference>
<dbReference type="SUPFAM" id="SSF100950">
    <property type="entry name" value="NagB/RpiA/CoA transferase-like"/>
    <property type="match status" value="1"/>
</dbReference>
<evidence type="ECO:0000255" key="1">
    <source>
        <dbReference type="HAMAP-Rule" id="MF_00170"/>
    </source>
</evidence>
<proteinExistence type="inferred from homology"/>
<comment type="function">
    <text evidence="1">Catalyzes the reversible conversion of ribose-5-phosphate to ribulose 5-phosphate.</text>
</comment>
<comment type="catalytic activity">
    <reaction evidence="1">
        <text>aldehydo-D-ribose 5-phosphate = D-ribulose 5-phosphate</text>
        <dbReference type="Rhea" id="RHEA:14657"/>
        <dbReference type="ChEBI" id="CHEBI:58121"/>
        <dbReference type="ChEBI" id="CHEBI:58273"/>
        <dbReference type="EC" id="5.3.1.6"/>
    </reaction>
</comment>
<comment type="pathway">
    <text evidence="1">Carbohydrate degradation; pentose phosphate pathway; D-ribose 5-phosphate from D-ribulose 5-phosphate (non-oxidative stage): step 1/1.</text>
</comment>
<comment type="subunit">
    <text evidence="1">Homodimer.</text>
</comment>
<comment type="similarity">
    <text evidence="1">Belongs to the ribose 5-phosphate isomerase family.</text>
</comment>
<sequence>MTQDEMKKAAGWAALKYVEEGSIVGVGTGSTVNHFIDALATMKDDIEGAVSSSEASTQKMKALGIPVYDLNSVDRLSVYVDGADEINDRMDMIKGGGAALTREKIVAAVAEKFICIVDNTKQVNILGEFPLPVEVIPMARSYVARQLVKLGGDPVYRQGVVTDNGNVILDVYNLKILNPKELESQINEIVGVVTNGLFAKRGADVLLVGTPDGVKTFTTK</sequence>
<gene>
    <name evidence="1" type="primary">rpiA</name>
    <name type="ordered locus">Sputw3181_1013</name>
</gene>
<organism>
    <name type="scientific">Shewanella sp. (strain W3-18-1)</name>
    <dbReference type="NCBI Taxonomy" id="351745"/>
    <lineage>
        <taxon>Bacteria</taxon>
        <taxon>Pseudomonadati</taxon>
        <taxon>Pseudomonadota</taxon>
        <taxon>Gammaproteobacteria</taxon>
        <taxon>Alteromonadales</taxon>
        <taxon>Shewanellaceae</taxon>
        <taxon>Shewanella</taxon>
    </lineage>
</organism>
<protein>
    <recommendedName>
        <fullName evidence="1">Ribose-5-phosphate isomerase A</fullName>
        <ecNumber evidence="1">5.3.1.6</ecNumber>
    </recommendedName>
    <alternativeName>
        <fullName evidence="1">Phosphoriboisomerase A</fullName>
        <shortName evidence="1">PRI</shortName>
    </alternativeName>
</protein>